<accession>Q97II1</accession>
<comment type="function">
    <text>Catalyzes the conversion of butyryl-CoA through butyryl phosphate to butyrate.</text>
</comment>
<comment type="catalytic activity">
    <reaction>
        <text>butanoate + ATP = butanoyl phosphate + ADP</text>
        <dbReference type="Rhea" id="RHEA:13585"/>
        <dbReference type="ChEBI" id="CHEBI:17968"/>
        <dbReference type="ChEBI" id="CHEBI:30616"/>
        <dbReference type="ChEBI" id="CHEBI:58079"/>
        <dbReference type="ChEBI" id="CHEBI:456216"/>
        <dbReference type="EC" id="2.7.2.7"/>
    </reaction>
</comment>
<comment type="pathway">
    <text>Lipid metabolism; butanoate metabolism.</text>
</comment>
<comment type="subunit">
    <text>Homodimer.</text>
</comment>
<comment type="subcellular location">
    <subcellularLocation>
        <location>Cytoplasm</location>
    </subcellularLocation>
</comment>
<comment type="similarity">
    <text evidence="1">Belongs to the acetokinase family.</text>
</comment>
<name>BUK2_CLOAB</name>
<protein>
    <recommendedName>
        <fullName>Butyrate kinase 2</fullName>
        <shortName>BK 2</shortName>
        <ecNumber>2.7.2.7</ecNumber>
    </recommendedName>
    <alternativeName>
        <fullName>BKII</fullName>
    </alternativeName>
</protein>
<reference key="1">
    <citation type="journal article" date="2001" name="J. Bacteriol.">
        <title>Genome sequence and comparative analysis of the solvent-producing bacterium Clostridium acetobutylicum.</title>
        <authorList>
            <person name="Noelling J."/>
            <person name="Breton G."/>
            <person name="Omelchenko M.V."/>
            <person name="Makarova K.S."/>
            <person name="Zeng Q."/>
            <person name="Gibson R."/>
            <person name="Lee H.M."/>
            <person name="Dubois J."/>
            <person name="Qiu D."/>
            <person name="Hitti J."/>
            <person name="Wolf Y.I."/>
            <person name="Tatusov R.L."/>
            <person name="Sabathe F."/>
            <person name="Doucette-Stamm L.A."/>
            <person name="Soucaille P."/>
            <person name="Daly M.J."/>
            <person name="Bennett G.N."/>
            <person name="Koonin E.V."/>
            <person name="Smith D.R."/>
        </authorList>
    </citation>
    <scope>NUCLEOTIDE SEQUENCE [LARGE SCALE GENOMIC DNA]</scope>
    <source>
        <strain>ATCC 824 / DSM 792 / JCM 1419 / IAM 19013 / LMG 5710 / NBRC 13948 / NRRL B-527 / VKM B-1787 / 2291 / W</strain>
    </source>
</reference>
<reference key="2">
    <citation type="journal article" date="2000" name="J. Mol. Microbiol. Biotechnol.">
        <title>Identification and characterization of a second butyrate kinase from Clostridium acetobutylicum ATCC 824.</title>
        <authorList>
            <person name="Huang K.X."/>
            <person name="Huang S."/>
            <person name="Rudolph F.B."/>
            <person name="Bennett G.N."/>
        </authorList>
    </citation>
    <scope>CHARACTERIZATION</scope>
    <source>
        <strain>ATCC 824 / DSM 792 / JCM 1419 / IAM 19013 / LMG 5710 / NBRC 13948 / NRRL B-527 / VKM B-1787 / 2291 / W</strain>
    </source>
</reference>
<gene>
    <name type="primary">buk2</name>
    <name type="ordered locus">CA_C1660</name>
</gene>
<proteinExistence type="evidence at protein level"/>
<feature type="chain" id="PRO_0000107658" description="Butyrate kinase 2">
    <location>
        <begin position="1"/>
        <end position="356"/>
    </location>
</feature>
<organism>
    <name type="scientific">Clostridium acetobutylicum (strain ATCC 824 / DSM 792 / JCM 1419 / IAM 19013 / LMG 5710 / NBRC 13948 / NRRL B-527 / VKM B-1787 / 2291 / W)</name>
    <dbReference type="NCBI Taxonomy" id="272562"/>
    <lineage>
        <taxon>Bacteria</taxon>
        <taxon>Bacillati</taxon>
        <taxon>Bacillota</taxon>
        <taxon>Clostridia</taxon>
        <taxon>Eubacteriales</taxon>
        <taxon>Clostridiaceae</taxon>
        <taxon>Clostridium</taxon>
    </lineage>
</organism>
<evidence type="ECO:0000305" key="1"/>
<sequence>MKFKLLTINPGSTSTKIAVFENEKEILSETLRHSSKELEAYKNIYEQFEFRKDTILKVLKDKNFNIQNIDAVVGRGGLLKPIVGGTYKVNEKMLKDLKAGVQGEHASNLGGIIANSIAEAFGVSAYIVDPVVVDEMEDIARFSGIPELPRKSIFHALNQKAVAKRYAKESERDYEDLNIIVAHMGGGVSVGAHKNGKIIDVNNALDGEGAFSPERSGNLPSGDLVRLCFSGKYTEDEILKKITGKGGFVAYHGTNNALDVQNAALEGDYDAKMTYNAMGYQVAKDIGSAAAVLDGKVDCIILTGGIAYNKLMTDFIAKKVSFIAPITIYPGEDEMLALAEGTLRVLSGQEEAKKYK</sequence>
<dbReference type="EC" id="2.7.2.7"/>
<dbReference type="EMBL" id="AE001437">
    <property type="protein sequence ID" value="AAK79626.1"/>
    <property type="molecule type" value="Genomic_DNA"/>
</dbReference>
<dbReference type="PIR" id="G97104">
    <property type="entry name" value="G97104"/>
</dbReference>
<dbReference type="RefSeq" id="NP_348286.1">
    <property type="nucleotide sequence ID" value="NC_003030.1"/>
</dbReference>
<dbReference type="SMR" id="Q97II1"/>
<dbReference type="STRING" id="272562.CA_C1660"/>
<dbReference type="KEGG" id="cac:CA_C1660"/>
<dbReference type="PATRIC" id="fig|272562.8.peg.1863"/>
<dbReference type="eggNOG" id="COG3426">
    <property type="taxonomic scope" value="Bacteria"/>
</dbReference>
<dbReference type="HOGENOM" id="CLU_048716_0_0_9"/>
<dbReference type="OrthoDB" id="9771859at2"/>
<dbReference type="BRENDA" id="2.7.2.7">
    <property type="organism ID" value="1452"/>
</dbReference>
<dbReference type="UniPathway" id="UPA00863"/>
<dbReference type="Proteomes" id="UP000000814">
    <property type="component" value="Chromosome"/>
</dbReference>
<dbReference type="GO" id="GO:0005737">
    <property type="term" value="C:cytoplasm"/>
    <property type="evidence" value="ECO:0007669"/>
    <property type="project" value="UniProtKB-SubCell"/>
</dbReference>
<dbReference type="GO" id="GO:0008776">
    <property type="term" value="F:acetate kinase activity"/>
    <property type="evidence" value="ECO:0007669"/>
    <property type="project" value="TreeGrafter"/>
</dbReference>
<dbReference type="GO" id="GO:0005524">
    <property type="term" value="F:ATP binding"/>
    <property type="evidence" value="ECO:0007669"/>
    <property type="project" value="UniProtKB-KW"/>
</dbReference>
<dbReference type="GO" id="GO:0047761">
    <property type="term" value="F:butyrate kinase activity"/>
    <property type="evidence" value="ECO:0007669"/>
    <property type="project" value="UniProtKB-UniRule"/>
</dbReference>
<dbReference type="GO" id="GO:0006083">
    <property type="term" value="P:acetate metabolic process"/>
    <property type="evidence" value="ECO:0007669"/>
    <property type="project" value="TreeGrafter"/>
</dbReference>
<dbReference type="GO" id="GO:0019605">
    <property type="term" value="P:butyrate metabolic process"/>
    <property type="evidence" value="ECO:0007669"/>
    <property type="project" value="UniProtKB-UniPathway"/>
</dbReference>
<dbReference type="CDD" id="cd24011">
    <property type="entry name" value="ASKHA_NBD_BK"/>
    <property type="match status" value="1"/>
</dbReference>
<dbReference type="Gene3D" id="3.30.420.40">
    <property type="match status" value="2"/>
</dbReference>
<dbReference type="HAMAP" id="MF_00542">
    <property type="entry name" value="Butyrate_kinase"/>
    <property type="match status" value="1"/>
</dbReference>
<dbReference type="InterPro" id="IPR000890">
    <property type="entry name" value="Aliphatic_acid_kin_short-chain"/>
</dbReference>
<dbReference type="InterPro" id="IPR023865">
    <property type="entry name" value="Aliphatic_acid_kinase_CS"/>
</dbReference>
<dbReference type="InterPro" id="IPR043129">
    <property type="entry name" value="ATPase_NBD"/>
</dbReference>
<dbReference type="InterPro" id="IPR011245">
    <property type="entry name" value="Butyrate_kin"/>
</dbReference>
<dbReference type="NCBIfam" id="TIGR02707">
    <property type="entry name" value="butyr_kinase"/>
    <property type="match status" value="1"/>
</dbReference>
<dbReference type="NCBIfam" id="NF002834">
    <property type="entry name" value="PRK03011.1-5"/>
    <property type="match status" value="1"/>
</dbReference>
<dbReference type="PANTHER" id="PTHR21060">
    <property type="entry name" value="ACETATE KINASE"/>
    <property type="match status" value="1"/>
</dbReference>
<dbReference type="PANTHER" id="PTHR21060:SF3">
    <property type="entry name" value="BUTYRATE KINASE 2-RELATED"/>
    <property type="match status" value="1"/>
</dbReference>
<dbReference type="Pfam" id="PF00871">
    <property type="entry name" value="Acetate_kinase"/>
    <property type="match status" value="1"/>
</dbReference>
<dbReference type="PIRSF" id="PIRSF036458">
    <property type="entry name" value="Butyrate_kin"/>
    <property type="match status" value="1"/>
</dbReference>
<dbReference type="PRINTS" id="PR00471">
    <property type="entry name" value="ACETATEKNASE"/>
</dbReference>
<dbReference type="SUPFAM" id="SSF53067">
    <property type="entry name" value="Actin-like ATPase domain"/>
    <property type="match status" value="2"/>
</dbReference>
<dbReference type="PROSITE" id="PS01075">
    <property type="entry name" value="ACETATE_KINASE_1"/>
    <property type="match status" value="1"/>
</dbReference>
<dbReference type="PROSITE" id="PS01076">
    <property type="entry name" value="ACETATE_KINASE_2"/>
    <property type="match status" value="1"/>
</dbReference>
<keyword id="KW-0067">ATP-binding</keyword>
<keyword id="KW-0963">Cytoplasm</keyword>
<keyword id="KW-0418">Kinase</keyword>
<keyword id="KW-0547">Nucleotide-binding</keyword>
<keyword id="KW-1185">Reference proteome</keyword>
<keyword id="KW-0808">Transferase</keyword>